<evidence type="ECO:0000269" key="1">
    <source>
    </source>
</evidence>
<evidence type="ECO:0000305" key="2">
    <source>
    </source>
</evidence>
<organism>
    <name type="scientific">Pseudomonas aeruginosa (strain UCBPP-PA14)</name>
    <dbReference type="NCBI Taxonomy" id="208963"/>
    <lineage>
        <taxon>Bacteria</taxon>
        <taxon>Pseudomonadati</taxon>
        <taxon>Pseudomonadota</taxon>
        <taxon>Gammaproteobacteria</taxon>
        <taxon>Pseudomonadales</taxon>
        <taxon>Pseudomonadaceae</taxon>
        <taxon>Pseudomonas</taxon>
    </lineage>
</organism>
<comment type="function">
    <text evidence="1">Type VI secretion exported toxin that pyrophosphorylates adenosine nucleotides to produce (p)ppApp. Thereby, depletes cellular ADP and ATP to dysregulate central metabolism in competitor cells.</text>
</comment>
<comment type="catalytic activity">
    <reaction evidence="1">
        <text>AMP + ATP = adenosine 3'-diphosphate,5'-phosphate + AMP + H(+)</text>
        <dbReference type="Rhea" id="RHEA:62336"/>
        <dbReference type="ChEBI" id="CHEBI:15378"/>
        <dbReference type="ChEBI" id="CHEBI:30616"/>
        <dbReference type="ChEBI" id="CHEBI:145541"/>
        <dbReference type="ChEBI" id="CHEBI:456215"/>
    </reaction>
</comment>
<comment type="catalytic activity">
    <reaction evidence="1">
        <text>ADP + ATP = adenosine 3'-diphosphate,5'-diphosphate + AMP</text>
        <dbReference type="Rhea" id="RHEA:62332"/>
        <dbReference type="ChEBI" id="CHEBI:30616"/>
        <dbReference type="ChEBI" id="CHEBI:145676"/>
        <dbReference type="ChEBI" id="CHEBI:456215"/>
        <dbReference type="ChEBI" id="CHEBI:456216"/>
    </reaction>
</comment>
<comment type="catalytic activity">
    <reaction evidence="1">
        <text>2 ATP = adenosine 3'-diphosphate,5'-triphosphate + AMP</text>
        <dbReference type="Rhea" id="RHEA:59820"/>
        <dbReference type="ChEBI" id="CHEBI:30616"/>
        <dbReference type="ChEBI" id="CHEBI:145540"/>
        <dbReference type="ChEBI" id="CHEBI:456215"/>
    </reaction>
</comment>
<comment type="subcellular location">
    <subcellularLocation>
        <location evidence="2">Secreted</location>
    </subcellularLocation>
</comment>
<comment type="disruption phenotype">
    <text evidence="1">Deletion mutant in PA14 strain displays an approximately 40-fold decrease in competitive index against PAO1 strain.</text>
</comment>
<sequence length="439" mass="45115">MVAGAVAGALIGAAVVAATAATGGLAAVILAGSIAAGGLSMFQIVKGLTTIFELPEPTTGVLIRGSFNVYVNSRNAMRAGDDVSATCSGLPLNHPLWPFPVLIAEGSATVYINGKPAARLQSKMVCGAHIKTGSQNTFIGGPTERVAFVLDLEEWLHTGLEALGLAALAGGLLLAAMAGVAALVGVVAIGGLMMGGMALLGDLGDRLGPGYRDLFQGVAGMALLGFGPKMARLGNAPKGAPKTQVPKGFEKVYGKAPAAKAEIDAVADGLAAKHGGRVAKAPIKSRERAMQKINNDYKGDPTKIKDLARNTIIVEGDKVNTVAAELANRGAKVKVIDGNADPLGYSGVNSTMNTKAGIPGEIQVNSPEMIYAKESEDMARILLGNDTYDAVAAKAGVPGGQGHKYYEDWRVLDPKSPEAQAIAEKSRAYYDAVRKGNGN</sequence>
<accession>A0A0H2ZJS4</accession>
<reference key="1">
    <citation type="journal article" date="2006" name="Genome Biol.">
        <title>Genomic analysis reveals that Pseudomonas aeruginosa virulence is combinatorial.</title>
        <authorList>
            <person name="Lee D.G."/>
            <person name="Urbach J.M."/>
            <person name="Wu G."/>
            <person name="Liberati N.T."/>
            <person name="Feinbaum R.L."/>
            <person name="Miyata S."/>
            <person name="Diggins L.T."/>
            <person name="He J."/>
            <person name="Saucier M."/>
            <person name="Deziel E."/>
            <person name="Friedman L."/>
            <person name="Li L."/>
            <person name="Grills G."/>
            <person name="Montgomery K."/>
            <person name="Kucherlapati R."/>
            <person name="Rahme L.G."/>
            <person name="Ausubel F.M."/>
        </authorList>
    </citation>
    <scope>NUCLEOTIDE SEQUENCE [LARGE SCALE GENOMIC DNA]</scope>
    <source>
        <strain>UCBPP-PA14</strain>
    </source>
</reference>
<reference key="2">
    <citation type="journal article" date="2019" name="Nature">
        <title>An interbacterial toxin inhibits target cell growth by synthesizing (p)ppApp.</title>
        <authorList>
            <person name="Ahmad S."/>
            <person name="Wang B."/>
            <person name="Walker M.D."/>
            <person name="Tran H.R."/>
            <person name="Stogios P.J."/>
            <person name="Savchenko A."/>
            <person name="Grant R.A."/>
            <person name="McArthur A.G."/>
            <person name="Laub M.T."/>
            <person name="Whitney J.C."/>
        </authorList>
    </citation>
    <scope>FUNCTION</scope>
    <scope>CATALYTIC ACTIVITY</scope>
    <scope>DISRUPTION PHENOTYPE</scope>
    <source>
        <strain>UCBPP-PA14</strain>
    </source>
</reference>
<protein>
    <recommendedName>
        <fullName>(p)ppApp synthetase toxin Tas1</fullName>
    </recommendedName>
</protein>
<dbReference type="EMBL" id="CP000438">
    <property type="protein sequence ID" value="ABJ15050.1"/>
    <property type="molecule type" value="Genomic_DNA"/>
</dbReference>
<dbReference type="SMR" id="A0A0H2ZJS4"/>
<dbReference type="KEGG" id="pau:PA14_01140"/>
<dbReference type="HOGENOM" id="CLU_594279_0_0_6"/>
<dbReference type="Proteomes" id="UP000000653">
    <property type="component" value="Chromosome"/>
</dbReference>
<dbReference type="GO" id="GO:0005576">
    <property type="term" value="C:extracellular region"/>
    <property type="evidence" value="ECO:0007669"/>
    <property type="project" value="UniProtKB-SubCell"/>
</dbReference>
<dbReference type="CDD" id="cd14742">
    <property type="entry name" value="PAAR_RHS"/>
    <property type="match status" value="1"/>
</dbReference>
<dbReference type="Gene3D" id="2.60.200.60">
    <property type="match status" value="1"/>
</dbReference>
<dbReference type="InterPro" id="IPR008727">
    <property type="entry name" value="PAAR_motif"/>
</dbReference>
<dbReference type="Pfam" id="PF05488">
    <property type="entry name" value="PAAR_motif"/>
    <property type="match status" value="1"/>
</dbReference>
<feature type="chain" id="PRO_0000449568" description="(p)ppApp synthetase toxin Tas1">
    <location>
        <begin position="1"/>
        <end position="439"/>
    </location>
</feature>
<gene>
    <name type="primary">tas1</name>
    <name type="ordered locus">PA14_01140</name>
</gene>
<proteinExistence type="evidence at protein level"/>
<name>TAS1_PSEAB</name>
<keyword id="KW-0964">Secreted</keyword>